<sequence length="227" mass="25266">MSQDLSHVPESIRMVLIGPPGAGKGTQAPNLTERFCACHLATGDMLRSQVAKQTPLGIEAKKIMDDGKLVSDEIMINMIKDELTNNQDCKKGFILDGFPRTIPQAEKLDEMLAQQGRPLEKAVELKIDDELLVSRITGRLVHPASGRSYHKVFNPPKTEMKDDITGEDLVQRSDDNVEALKKRLTSYHKQTEPIVDFYKKTGIWAGVDASQPPKTVWSDILKCLGKN</sequence>
<gene>
    <name evidence="1" type="primary">ADK1</name>
    <name type="ordered locus">KLLA0F13376g</name>
</gene>
<comment type="function">
    <text evidence="1">Catalyzes the reversible transfer of the terminal phosphate group between ATP and AMP. Plays an important role in cellular energy homeostasis and in adenine nucleotide metabolism. Adenylate kinase activity is critical for regulation of the phosphate utilization and the AMP de novo biosynthesis pathways.</text>
</comment>
<comment type="catalytic activity">
    <reaction evidence="1">
        <text>AMP + ATP = 2 ADP</text>
        <dbReference type="Rhea" id="RHEA:12973"/>
        <dbReference type="ChEBI" id="CHEBI:30616"/>
        <dbReference type="ChEBI" id="CHEBI:456215"/>
        <dbReference type="ChEBI" id="CHEBI:456216"/>
        <dbReference type="EC" id="2.7.4.3"/>
    </reaction>
</comment>
<comment type="subunit">
    <text evidence="1">Monomer.</text>
</comment>
<comment type="subcellular location">
    <subcellularLocation>
        <location evidence="1">Cytoplasm</location>
        <location evidence="1">Cytosol</location>
    </subcellularLocation>
    <subcellularLocation>
        <location evidence="1">Mitochondrion intermembrane space</location>
    </subcellularLocation>
    <text evidence="1">Predominantly mitochondrial.</text>
</comment>
<comment type="domain">
    <text evidence="1">Consists of three domains, a large central CORE domain and two small peripheral domains, NMPbind and LID, which undergo movements during catalysis. The LID domain closes over the site of phosphoryl transfer upon ATP binding. Assembling and dissambling the active center during each catalytic cycle provides an effective means to prevent ATP hydrolysis.</text>
</comment>
<comment type="similarity">
    <text evidence="1">Belongs to the adenylate kinase family. AK2 subfamily.</text>
</comment>
<protein>
    <recommendedName>
        <fullName evidence="1">Adenylate kinase</fullName>
        <ecNumber evidence="1">2.7.4.3</ecNumber>
    </recommendedName>
    <alternativeName>
        <fullName evidence="1">ATP-AMP transphosphorylase</fullName>
    </alternativeName>
    <alternativeName>
        <fullName evidence="1">ATP:AMP phosphotransferase</fullName>
    </alternativeName>
    <alternativeName>
        <fullName evidence="1">Adenylate kinase cytosolic and mitochondrial</fullName>
    </alternativeName>
    <alternativeName>
        <fullName evidence="1">Adenylate monophosphate kinase</fullName>
    </alternativeName>
</protein>
<feature type="chain" id="PRO_0000365675" description="Adenylate kinase">
    <location>
        <begin position="1"/>
        <end position="227"/>
    </location>
</feature>
<feature type="region of interest" description="NMP" evidence="1">
    <location>
        <begin position="41"/>
        <end position="70"/>
    </location>
</feature>
<feature type="region of interest" description="LID" evidence="1">
    <location>
        <begin position="138"/>
        <end position="175"/>
    </location>
</feature>
<feature type="binding site" evidence="1">
    <location>
        <begin position="21"/>
        <end position="26"/>
    </location>
    <ligand>
        <name>ATP</name>
        <dbReference type="ChEBI" id="CHEBI:30616"/>
    </ligand>
</feature>
<feature type="binding site" evidence="1">
    <location>
        <position position="42"/>
    </location>
    <ligand>
        <name>AMP</name>
        <dbReference type="ChEBI" id="CHEBI:456215"/>
    </ligand>
</feature>
<feature type="binding site" evidence="1">
    <location>
        <position position="47"/>
    </location>
    <ligand>
        <name>AMP</name>
        <dbReference type="ChEBI" id="CHEBI:456215"/>
    </ligand>
</feature>
<feature type="binding site" evidence="1">
    <location>
        <begin position="68"/>
        <end position="70"/>
    </location>
    <ligand>
        <name>AMP</name>
        <dbReference type="ChEBI" id="CHEBI:456215"/>
    </ligand>
</feature>
<feature type="binding site" evidence="1">
    <location>
        <begin position="97"/>
        <end position="100"/>
    </location>
    <ligand>
        <name>AMP</name>
        <dbReference type="ChEBI" id="CHEBI:456215"/>
    </ligand>
</feature>
<feature type="binding site" evidence="1">
    <location>
        <position position="104"/>
    </location>
    <ligand>
        <name>AMP</name>
        <dbReference type="ChEBI" id="CHEBI:456215"/>
    </ligand>
</feature>
<feature type="binding site" evidence="1">
    <location>
        <position position="139"/>
    </location>
    <ligand>
        <name>ATP</name>
        <dbReference type="ChEBI" id="CHEBI:30616"/>
    </ligand>
</feature>
<feature type="binding site" evidence="1">
    <location>
        <begin position="148"/>
        <end position="149"/>
    </location>
    <ligand>
        <name>ATP</name>
        <dbReference type="ChEBI" id="CHEBI:30616"/>
    </ligand>
</feature>
<feature type="binding site" evidence="1">
    <location>
        <position position="172"/>
    </location>
    <ligand>
        <name>AMP</name>
        <dbReference type="ChEBI" id="CHEBI:456215"/>
    </ligand>
</feature>
<feature type="binding site" evidence="1">
    <location>
        <position position="183"/>
    </location>
    <ligand>
        <name>AMP</name>
        <dbReference type="ChEBI" id="CHEBI:456215"/>
    </ligand>
</feature>
<feature type="binding site" evidence="1">
    <location>
        <position position="211"/>
    </location>
    <ligand>
        <name>ATP</name>
        <dbReference type="ChEBI" id="CHEBI:30616"/>
    </ligand>
</feature>
<evidence type="ECO:0000255" key="1">
    <source>
        <dbReference type="HAMAP-Rule" id="MF_03168"/>
    </source>
</evidence>
<organism>
    <name type="scientific">Kluyveromyces lactis (strain ATCC 8585 / CBS 2359 / DSM 70799 / NBRC 1267 / NRRL Y-1140 / WM37)</name>
    <name type="common">Yeast</name>
    <name type="synonym">Candida sphaerica</name>
    <dbReference type="NCBI Taxonomy" id="284590"/>
    <lineage>
        <taxon>Eukaryota</taxon>
        <taxon>Fungi</taxon>
        <taxon>Dikarya</taxon>
        <taxon>Ascomycota</taxon>
        <taxon>Saccharomycotina</taxon>
        <taxon>Saccharomycetes</taxon>
        <taxon>Saccharomycetales</taxon>
        <taxon>Saccharomycetaceae</taxon>
        <taxon>Kluyveromyces</taxon>
    </lineage>
</organism>
<proteinExistence type="inferred from homology"/>
<reference key="1">
    <citation type="journal article" date="2004" name="Nature">
        <title>Genome evolution in yeasts.</title>
        <authorList>
            <person name="Dujon B."/>
            <person name="Sherman D."/>
            <person name="Fischer G."/>
            <person name="Durrens P."/>
            <person name="Casaregola S."/>
            <person name="Lafontaine I."/>
            <person name="de Montigny J."/>
            <person name="Marck C."/>
            <person name="Neuveglise C."/>
            <person name="Talla E."/>
            <person name="Goffard N."/>
            <person name="Frangeul L."/>
            <person name="Aigle M."/>
            <person name="Anthouard V."/>
            <person name="Babour A."/>
            <person name="Barbe V."/>
            <person name="Barnay S."/>
            <person name="Blanchin S."/>
            <person name="Beckerich J.-M."/>
            <person name="Beyne E."/>
            <person name="Bleykasten C."/>
            <person name="Boisrame A."/>
            <person name="Boyer J."/>
            <person name="Cattolico L."/>
            <person name="Confanioleri F."/>
            <person name="de Daruvar A."/>
            <person name="Despons L."/>
            <person name="Fabre E."/>
            <person name="Fairhead C."/>
            <person name="Ferry-Dumazet H."/>
            <person name="Groppi A."/>
            <person name="Hantraye F."/>
            <person name="Hennequin C."/>
            <person name="Jauniaux N."/>
            <person name="Joyet P."/>
            <person name="Kachouri R."/>
            <person name="Kerrest A."/>
            <person name="Koszul R."/>
            <person name="Lemaire M."/>
            <person name="Lesur I."/>
            <person name="Ma L."/>
            <person name="Muller H."/>
            <person name="Nicaud J.-M."/>
            <person name="Nikolski M."/>
            <person name="Oztas S."/>
            <person name="Ozier-Kalogeropoulos O."/>
            <person name="Pellenz S."/>
            <person name="Potier S."/>
            <person name="Richard G.-F."/>
            <person name="Straub M.-L."/>
            <person name="Suleau A."/>
            <person name="Swennen D."/>
            <person name="Tekaia F."/>
            <person name="Wesolowski-Louvel M."/>
            <person name="Westhof E."/>
            <person name="Wirth B."/>
            <person name="Zeniou-Meyer M."/>
            <person name="Zivanovic Y."/>
            <person name="Bolotin-Fukuhara M."/>
            <person name="Thierry A."/>
            <person name="Bouchier C."/>
            <person name="Caudron B."/>
            <person name="Scarpelli C."/>
            <person name="Gaillardin C."/>
            <person name="Weissenbach J."/>
            <person name="Wincker P."/>
            <person name="Souciet J.-L."/>
        </authorList>
    </citation>
    <scope>NUCLEOTIDE SEQUENCE [LARGE SCALE GENOMIC DNA]</scope>
    <source>
        <strain>ATCC 8585 / CBS 2359 / DSM 70799 / NBRC 1267 / NRRL Y-1140 / WM37</strain>
    </source>
</reference>
<accession>Q6CK57</accession>
<keyword id="KW-0067">ATP-binding</keyword>
<keyword id="KW-0963">Cytoplasm</keyword>
<keyword id="KW-0418">Kinase</keyword>
<keyword id="KW-0496">Mitochondrion</keyword>
<keyword id="KW-0547">Nucleotide-binding</keyword>
<keyword id="KW-1185">Reference proteome</keyword>
<keyword id="KW-0808">Transferase</keyword>
<dbReference type="EC" id="2.7.4.3" evidence="1"/>
<dbReference type="EMBL" id="CR382126">
    <property type="protein sequence ID" value="CAG98390.1"/>
    <property type="molecule type" value="Genomic_DNA"/>
</dbReference>
<dbReference type="RefSeq" id="XP_455682.1">
    <property type="nucleotide sequence ID" value="XM_455682.1"/>
</dbReference>
<dbReference type="SMR" id="Q6CK57"/>
<dbReference type="FunCoup" id="Q6CK57">
    <property type="interactions" value="855"/>
</dbReference>
<dbReference type="STRING" id="284590.Q6CK57"/>
<dbReference type="PaxDb" id="284590-Q6CK57"/>
<dbReference type="KEGG" id="kla:KLLA0_F13376g"/>
<dbReference type="eggNOG" id="KOG3078">
    <property type="taxonomic scope" value="Eukaryota"/>
</dbReference>
<dbReference type="HOGENOM" id="CLU_032354_1_0_1"/>
<dbReference type="InParanoid" id="Q6CK57"/>
<dbReference type="OMA" id="VYHEQTA"/>
<dbReference type="Proteomes" id="UP000000598">
    <property type="component" value="Chromosome F"/>
</dbReference>
<dbReference type="GO" id="GO:0005829">
    <property type="term" value="C:cytosol"/>
    <property type="evidence" value="ECO:0007669"/>
    <property type="project" value="UniProtKB-SubCell"/>
</dbReference>
<dbReference type="GO" id="GO:0005758">
    <property type="term" value="C:mitochondrial intermembrane space"/>
    <property type="evidence" value="ECO:0007669"/>
    <property type="project" value="UniProtKB-SubCell"/>
</dbReference>
<dbReference type="GO" id="GO:0004017">
    <property type="term" value="F:adenylate kinase activity"/>
    <property type="evidence" value="ECO:0007669"/>
    <property type="project" value="UniProtKB-UniRule"/>
</dbReference>
<dbReference type="GO" id="GO:0005524">
    <property type="term" value="F:ATP binding"/>
    <property type="evidence" value="ECO:0007669"/>
    <property type="project" value="UniProtKB-KW"/>
</dbReference>
<dbReference type="GO" id="GO:0006172">
    <property type="term" value="P:ADP biosynthetic process"/>
    <property type="evidence" value="ECO:0007669"/>
    <property type="project" value="UniProtKB-UniRule"/>
</dbReference>
<dbReference type="GO" id="GO:0046033">
    <property type="term" value="P:AMP metabolic process"/>
    <property type="evidence" value="ECO:0007669"/>
    <property type="project" value="UniProtKB-UniRule"/>
</dbReference>
<dbReference type="GO" id="GO:0046034">
    <property type="term" value="P:ATP metabolic process"/>
    <property type="evidence" value="ECO:0007669"/>
    <property type="project" value="UniProtKB-UniRule"/>
</dbReference>
<dbReference type="CDD" id="cd01428">
    <property type="entry name" value="ADK"/>
    <property type="match status" value="1"/>
</dbReference>
<dbReference type="FunFam" id="3.40.50.300:FF:000106">
    <property type="entry name" value="Adenylate kinase mitochondrial"/>
    <property type="match status" value="1"/>
</dbReference>
<dbReference type="Gene3D" id="3.40.50.300">
    <property type="entry name" value="P-loop containing nucleotide triphosphate hydrolases"/>
    <property type="match status" value="1"/>
</dbReference>
<dbReference type="HAMAP" id="MF_00235">
    <property type="entry name" value="Adenylate_kinase_Adk"/>
    <property type="match status" value="1"/>
</dbReference>
<dbReference type="HAMAP" id="MF_03168">
    <property type="entry name" value="Adenylate_kinase_AK2"/>
    <property type="match status" value="1"/>
</dbReference>
<dbReference type="InterPro" id="IPR006259">
    <property type="entry name" value="Adenyl_kin_sub"/>
</dbReference>
<dbReference type="InterPro" id="IPR000850">
    <property type="entry name" value="Adenylat/UMP-CMP_kin"/>
</dbReference>
<dbReference type="InterPro" id="IPR033690">
    <property type="entry name" value="Adenylat_kinase_CS"/>
</dbReference>
<dbReference type="InterPro" id="IPR007862">
    <property type="entry name" value="Adenylate_kinase_lid-dom"/>
</dbReference>
<dbReference type="InterPro" id="IPR028587">
    <property type="entry name" value="AK2"/>
</dbReference>
<dbReference type="InterPro" id="IPR027417">
    <property type="entry name" value="P-loop_NTPase"/>
</dbReference>
<dbReference type="NCBIfam" id="TIGR01351">
    <property type="entry name" value="adk"/>
    <property type="match status" value="1"/>
</dbReference>
<dbReference type="NCBIfam" id="NF001380">
    <property type="entry name" value="PRK00279.1-2"/>
    <property type="match status" value="1"/>
</dbReference>
<dbReference type="NCBIfam" id="NF001381">
    <property type="entry name" value="PRK00279.1-3"/>
    <property type="match status" value="1"/>
</dbReference>
<dbReference type="NCBIfam" id="NF011100">
    <property type="entry name" value="PRK14527.1"/>
    <property type="match status" value="1"/>
</dbReference>
<dbReference type="PANTHER" id="PTHR23359">
    <property type="entry name" value="NUCLEOTIDE KINASE"/>
    <property type="match status" value="1"/>
</dbReference>
<dbReference type="Pfam" id="PF00406">
    <property type="entry name" value="ADK"/>
    <property type="match status" value="1"/>
</dbReference>
<dbReference type="Pfam" id="PF05191">
    <property type="entry name" value="ADK_lid"/>
    <property type="match status" value="1"/>
</dbReference>
<dbReference type="PRINTS" id="PR00094">
    <property type="entry name" value="ADENYLTKNASE"/>
</dbReference>
<dbReference type="SUPFAM" id="SSF52540">
    <property type="entry name" value="P-loop containing nucleoside triphosphate hydrolases"/>
    <property type="match status" value="1"/>
</dbReference>
<dbReference type="PROSITE" id="PS00113">
    <property type="entry name" value="ADENYLATE_KINASE"/>
    <property type="match status" value="1"/>
</dbReference>
<name>KAD2_KLULA</name>